<comment type="function">
    <text evidence="1">Catalyzes the conversion of N-acetyl-diaminopimelate to diaminopimelate and acetate.</text>
</comment>
<comment type="catalytic activity">
    <reaction evidence="1">
        <text>N-acetyl-(2S,6S)-2,6-diaminopimelate + H2O = (2S,6S)-2,6-diaminopimelate + acetate</text>
        <dbReference type="Rhea" id="RHEA:20405"/>
        <dbReference type="ChEBI" id="CHEBI:15377"/>
        <dbReference type="ChEBI" id="CHEBI:30089"/>
        <dbReference type="ChEBI" id="CHEBI:57609"/>
        <dbReference type="ChEBI" id="CHEBI:58767"/>
        <dbReference type="EC" id="3.5.1.47"/>
    </reaction>
</comment>
<comment type="pathway">
    <text evidence="1">Amino-acid biosynthesis; L-lysine biosynthesis via DAP pathway; LL-2,6-diaminopimelate from (S)-tetrahydrodipicolinate (acetylase route): step 3/3.</text>
</comment>
<comment type="similarity">
    <text evidence="1">Belongs to the peptidase M20A family. N-acetyldiaminopimelate deacetylase subfamily.</text>
</comment>
<sequence>MLSDEQLIKIRRHLHANPEIGMQEVKTHQFLLEQIAKFPQENLTIETISEIPTALLVRIAGSDPKRTIALRTDMDALPIQEETGLDFASKNDHVMHACGHDIHMTVALGILSYFAKHQPKDNLLVFFQPAEENEFGGKRFYDAGGFQGEYLPDEFYALHVNPQLPAGQIASRKGTLFAGSNELRISFIGKSGHAAYPQNAKDSIVAAANFVTNVQTVVSRNVDPIEGGVVTIGKFNAGKAMNIIAGKADIEGTIRSFTQSGMEIMTKHIRMIAEGIAGAFGQELKINFRQGGYMPVVNDERTTNFFIDYMKNADGVDFKIVQPAMIAEDFGFLSNQFEGTMCWLGVNDPKHSLHSDHLNPDESAITKGVEAIKGFLIARMQK</sequence>
<gene>
    <name type="ordered locus">OEOE_0773</name>
</gene>
<feature type="chain" id="PRO_0000376778" description="N-acetyldiaminopimelate deacetylase">
    <location>
        <begin position="1"/>
        <end position="382"/>
    </location>
</feature>
<feature type="active site" evidence="1">
    <location>
        <position position="73"/>
    </location>
</feature>
<feature type="active site" description="Proton acceptor" evidence="1">
    <location>
        <position position="132"/>
    </location>
</feature>
<protein>
    <recommendedName>
        <fullName evidence="1">N-acetyldiaminopimelate deacetylase</fullName>
        <ecNumber evidence="1">3.5.1.47</ecNumber>
    </recommendedName>
</protein>
<reference key="1">
    <citation type="journal article" date="2006" name="Proc. Natl. Acad. Sci. U.S.A.">
        <title>Comparative genomics of the lactic acid bacteria.</title>
        <authorList>
            <person name="Makarova K.S."/>
            <person name="Slesarev A."/>
            <person name="Wolf Y.I."/>
            <person name="Sorokin A."/>
            <person name="Mirkin B."/>
            <person name="Koonin E.V."/>
            <person name="Pavlov A."/>
            <person name="Pavlova N."/>
            <person name="Karamychev V."/>
            <person name="Polouchine N."/>
            <person name="Shakhova V."/>
            <person name="Grigoriev I."/>
            <person name="Lou Y."/>
            <person name="Rohksar D."/>
            <person name="Lucas S."/>
            <person name="Huang K."/>
            <person name="Goodstein D.M."/>
            <person name="Hawkins T."/>
            <person name="Plengvidhya V."/>
            <person name="Welker D."/>
            <person name="Hughes J."/>
            <person name="Goh Y."/>
            <person name="Benson A."/>
            <person name="Baldwin K."/>
            <person name="Lee J.-H."/>
            <person name="Diaz-Muniz I."/>
            <person name="Dosti B."/>
            <person name="Smeianov V."/>
            <person name="Wechter W."/>
            <person name="Barabote R."/>
            <person name="Lorca G."/>
            <person name="Altermann E."/>
            <person name="Barrangou R."/>
            <person name="Ganesan B."/>
            <person name="Xie Y."/>
            <person name="Rawsthorne H."/>
            <person name="Tamir D."/>
            <person name="Parker C."/>
            <person name="Breidt F."/>
            <person name="Broadbent J.R."/>
            <person name="Hutkins R."/>
            <person name="O'Sullivan D."/>
            <person name="Steele J."/>
            <person name="Unlu G."/>
            <person name="Saier M.H. Jr."/>
            <person name="Klaenhammer T."/>
            <person name="Richardson P."/>
            <person name="Kozyavkin S."/>
            <person name="Weimer B.C."/>
            <person name="Mills D.A."/>
        </authorList>
    </citation>
    <scope>NUCLEOTIDE SEQUENCE [LARGE SCALE GENOMIC DNA]</scope>
    <source>
        <strain>ATCC BAA-331 / PSU-1</strain>
    </source>
</reference>
<accession>Q04FS2</accession>
<organism>
    <name type="scientific">Oenococcus oeni (strain ATCC BAA-331 / PSU-1)</name>
    <dbReference type="NCBI Taxonomy" id="203123"/>
    <lineage>
        <taxon>Bacteria</taxon>
        <taxon>Bacillati</taxon>
        <taxon>Bacillota</taxon>
        <taxon>Bacilli</taxon>
        <taxon>Lactobacillales</taxon>
        <taxon>Lactobacillaceae</taxon>
        <taxon>Oenococcus</taxon>
    </lineage>
</organism>
<dbReference type="EC" id="3.5.1.47" evidence="1"/>
<dbReference type="EMBL" id="CP000411">
    <property type="protein sequence ID" value="ABJ56700.1"/>
    <property type="molecule type" value="Genomic_DNA"/>
</dbReference>
<dbReference type="RefSeq" id="WP_011677549.1">
    <property type="nucleotide sequence ID" value="NC_008528.1"/>
</dbReference>
<dbReference type="SMR" id="Q04FS2"/>
<dbReference type="STRING" id="203123.OEOE_0773"/>
<dbReference type="KEGG" id="ooe:OEOE_0773"/>
<dbReference type="PATRIC" id="fig|203123.7.peg.787"/>
<dbReference type="eggNOG" id="COG1473">
    <property type="taxonomic scope" value="Bacteria"/>
</dbReference>
<dbReference type="HOGENOM" id="CLU_023257_0_1_9"/>
<dbReference type="UniPathway" id="UPA00034">
    <property type="reaction ID" value="UER00024"/>
</dbReference>
<dbReference type="Proteomes" id="UP000000774">
    <property type="component" value="Chromosome"/>
</dbReference>
<dbReference type="GO" id="GO:0050118">
    <property type="term" value="F:N-acetyldiaminopimelate deacetylase activity"/>
    <property type="evidence" value="ECO:0007669"/>
    <property type="project" value="UniProtKB-UniRule"/>
</dbReference>
<dbReference type="GO" id="GO:0019877">
    <property type="term" value="P:diaminopimelate biosynthetic process"/>
    <property type="evidence" value="ECO:0007669"/>
    <property type="project" value="UniProtKB-UniRule"/>
</dbReference>
<dbReference type="GO" id="GO:0009089">
    <property type="term" value="P:lysine biosynthetic process via diaminopimelate"/>
    <property type="evidence" value="ECO:0007669"/>
    <property type="project" value="UniProtKB-UniRule"/>
</dbReference>
<dbReference type="CDD" id="cd05670">
    <property type="entry name" value="M20_Acy1_YkuR-like"/>
    <property type="match status" value="1"/>
</dbReference>
<dbReference type="FunFam" id="3.30.70.360:FF:000001">
    <property type="entry name" value="N-acetyldiaminopimelate deacetylase"/>
    <property type="match status" value="1"/>
</dbReference>
<dbReference type="Gene3D" id="3.30.70.360">
    <property type="match status" value="1"/>
</dbReference>
<dbReference type="Gene3D" id="3.40.630.10">
    <property type="entry name" value="Zn peptidases"/>
    <property type="match status" value="1"/>
</dbReference>
<dbReference type="HAMAP" id="MF_01692">
    <property type="entry name" value="DapEL"/>
    <property type="match status" value="1"/>
</dbReference>
<dbReference type="InterPro" id="IPR023905">
    <property type="entry name" value="AcetylDAP_deacetylase"/>
</dbReference>
<dbReference type="InterPro" id="IPR017439">
    <property type="entry name" value="Amidohydrolase"/>
</dbReference>
<dbReference type="InterPro" id="IPR036264">
    <property type="entry name" value="Bact_exopeptidase_dim_dom"/>
</dbReference>
<dbReference type="InterPro" id="IPR002933">
    <property type="entry name" value="Peptidase_M20"/>
</dbReference>
<dbReference type="InterPro" id="IPR011650">
    <property type="entry name" value="Peptidase_M20_dimer"/>
</dbReference>
<dbReference type="NCBIfam" id="TIGR01891">
    <property type="entry name" value="amidohydrolases"/>
    <property type="match status" value="1"/>
</dbReference>
<dbReference type="PANTHER" id="PTHR11014:SF98">
    <property type="entry name" value="N-ACETYLDIAMINOPIMELATE DEACETYLASE"/>
    <property type="match status" value="1"/>
</dbReference>
<dbReference type="PANTHER" id="PTHR11014">
    <property type="entry name" value="PEPTIDASE M20 FAMILY MEMBER"/>
    <property type="match status" value="1"/>
</dbReference>
<dbReference type="Pfam" id="PF07687">
    <property type="entry name" value="M20_dimer"/>
    <property type="match status" value="1"/>
</dbReference>
<dbReference type="Pfam" id="PF01546">
    <property type="entry name" value="Peptidase_M20"/>
    <property type="match status" value="1"/>
</dbReference>
<dbReference type="PIRSF" id="PIRSF005962">
    <property type="entry name" value="Pept_M20D_amidohydro"/>
    <property type="match status" value="1"/>
</dbReference>
<dbReference type="SUPFAM" id="SSF55031">
    <property type="entry name" value="Bacterial exopeptidase dimerisation domain"/>
    <property type="match status" value="1"/>
</dbReference>
<dbReference type="SUPFAM" id="SSF53187">
    <property type="entry name" value="Zn-dependent exopeptidases"/>
    <property type="match status" value="1"/>
</dbReference>
<proteinExistence type="inferred from homology"/>
<keyword id="KW-0028">Amino-acid biosynthesis</keyword>
<keyword id="KW-0220">Diaminopimelate biosynthesis</keyword>
<keyword id="KW-0378">Hydrolase</keyword>
<keyword id="KW-0457">Lysine biosynthesis</keyword>
<keyword id="KW-1185">Reference proteome</keyword>
<evidence type="ECO:0000255" key="1">
    <source>
        <dbReference type="HAMAP-Rule" id="MF_01692"/>
    </source>
</evidence>
<name>DAPEL_OENOB</name>